<feature type="chain" id="PRO_0000064204" description="Peptidyl-prolyl cis-trans isomerase B">
    <location>
        <begin position="1"/>
        <end position="143"/>
    </location>
</feature>
<feature type="domain" description="PPIase cyclophilin-type" evidence="2">
    <location>
        <begin position="1"/>
        <end position="143"/>
    </location>
</feature>
<gene>
    <name type="primary">ppiB</name>
    <name type="ordered locus">BSU23360</name>
</gene>
<proteinExistence type="evidence at protein level"/>
<reference key="1">
    <citation type="journal article" date="1993" name="Mol. Microbiol.">
        <title>The organization of the Bacillus subtilis 168 chromosome region between the spoVA and serA genetic loci, based on sequence data.</title>
        <authorList>
            <person name="Sorokin A.V."/>
            <person name="Zumstein E."/>
            <person name="Azevedo V."/>
            <person name="Ehrlich S.D."/>
            <person name="Serror P."/>
        </authorList>
    </citation>
    <scope>NUCLEOTIDE SEQUENCE [GENOMIC DNA]</scope>
    <source>
        <strain>168 / Marburg / ATCC 6051 / DSM 10 / JCM 1465 / NBRC 13719 / NCIMB 3610 / NRRL NRS-744 / VKM B-501</strain>
    </source>
</reference>
<reference key="2">
    <citation type="journal article" date="1994" name="Mol. Microbiol.">
        <title>Cloning and characterization of ppiB, a Bacillus subtilis gene which encodes a cyclosporin A-sensitive peptidyl-prolyl cis-trans isomerase.</title>
        <authorList>
            <person name="Herrler M."/>
            <person name="Bang H."/>
            <person name="Marahiel M.A."/>
        </authorList>
    </citation>
    <scope>NUCLEOTIDE SEQUENCE [GENOMIC DNA]</scope>
    <scope>PARTIAL PROTEIN SEQUENCE</scope>
    <source>
        <strain>168 / JH642</strain>
    </source>
</reference>
<reference key="3">
    <citation type="journal article" date="1997" name="Nature">
        <title>The complete genome sequence of the Gram-positive bacterium Bacillus subtilis.</title>
        <authorList>
            <person name="Kunst F."/>
            <person name="Ogasawara N."/>
            <person name="Moszer I."/>
            <person name="Albertini A.M."/>
            <person name="Alloni G."/>
            <person name="Azevedo V."/>
            <person name="Bertero M.G."/>
            <person name="Bessieres P."/>
            <person name="Bolotin A."/>
            <person name="Borchert S."/>
            <person name="Borriss R."/>
            <person name="Boursier L."/>
            <person name="Brans A."/>
            <person name="Braun M."/>
            <person name="Brignell S.C."/>
            <person name="Bron S."/>
            <person name="Brouillet S."/>
            <person name="Bruschi C.V."/>
            <person name="Caldwell B."/>
            <person name="Capuano V."/>
            <person name="Carter N.M."/>
            <person name="Choi S.-K."/>
            <person name="Codani J.-J."/>
            <person name="Connerton I.F."/>
            <person name="Cummings N.J."/>
            <person name="Daniel R.A."/>
            <person name="Denizot F."/>
            <person name="Devine K.M."/>
            <person name="Duesterhoeft A."/>
            <person name="Ehrlich S.D."/>
            <person name="Emmerson P.T."/>
            <person name="Entian K.-D."/>
            <person name="Errington J."/>
            <person name="Fabret C."/>
            <person name="Ferrari E."/>
            <person name="Foulger D."/>
            <person name="Fritz C."/>
            <person name="Fujita M."/>
            <person name="Fujita Y."/>
            <person name="Fuma S."/>
            <person name="Galizzi A."/>
            <person name="Galleron N."/>
            <person name="Ghim S.-Y."/>
            <person name="Glaser P."/>
            <person name="Goffeau A."/>
            <person name="Golightly E.J."/>
            <person name="Grandi G."/>
            <person name="Guiseppi G."/>
            <person name="Guy B.J."/>
            <person name="Haga K."/>
            <person name="Haiech J."/>
            <person name="Harwood C.R."/>
            <person name="Henaut A."/>
            <person name="Hilbert H."/>
            <person name="Holsappel S."/>
            <person name="Hosono S."/>
            <person name="Hullo M.-F."/>
            <person name="Itaya M."/>
            <person name="Jones L.-M."/>
            <person name="Joris B."/>
            <person name="Karamata D."/>
            <person name="Kasahara Y."/>
            <person name="Klaerr-Blanchard M."/>
            <person name="Klein C."/>
            <person name="Kobayashi Y."/>
            <person name="Koetter P."/>
            <person name="Koningstein G."/>
            <person name="Krogh S."/>
            <person name="Kumano M."/>
            <person name="Kurita K."/>
            <person name="Lapidus A."/>
            <person name="Lardinois S."/>
            <person name="Lauber J."/>
            <person name="Lazarevic V."/>
            <person name="Lee S.-M."/>
            <person name="Levine A."/>
            <person name="Liu H."/>
            <person name="Masuda S."/>
            <person name="Mauel C."/>
            <person name="Medigue C."/>
            <person name="Medina N."/>
            <person name="Mellado R.P."/>
            <person name="Mizuno M."/>
            <person name="Moestl D."/>
            <person name="Nakai S."/>
            <person name="Noback M."/>
            <person name="Noone D."/>
            <person name="O'Reilly M."/>
            <person name="Ogawa K."/>
            <person name="Ogiwara A."/>
            <person name="Oudega B."/>
            <person name="Park S.-H."/>
            <person name="Parro V."/>
            <person name="Pohl T.M."/>
            <person name="Portetelle D."/>
            <person name="Porwollik S."/>
            <person name="Prescott A.M."/>
            <person name="Presecan E."/>
            <person name="Pujic P."/>
            <person name="Purnelle B."/>
            <person name="Rapoport G."/>
            <person name="Rey M."/>
            <person name="Reynolds S."/>
            <person name="Rieger M."/>
            <person name="Rivolta C."/>
            <person name="Rocha E."/>
            <person name="Roche B."/>
            <person name="Rose M."/>
            <person name="Sadaie Y."/>
            <person name="Sato T."/>
            <person name="Scanlan E."/>
            <person name="Schleich S."/>
            <person name="Schroeter R."/>
            <person name="Scoffone F."/>
            <person name="Sekiguchi J."/>
            <person name="Sekowska A."/>
            <person name="Seror S.J."/>
            <person name="Serror P."/>
            <person name="Shin B.-S."/>
            <person name="Soldo B."/>
            <person name="Sorokin A."/>
            <person name="Tacconi E."/>
            <person name="Takagi T."/>
            <person name="Takahashi H."/>
            <person name="Takemaru K."/>
            <person name="Takeuchi M."/>
            <person name="Tamakoshi A."/>
            <person name="Tanaka T."/>
            <person name="Terpstra P."/>
            <person name="Tognoni A."/>
            <person name="Tosato V."/>
            <person name="Uchiyama S."/>
            <person name="Vandenbol M."/>
            <person name="Vannier F."/>
            <person name="Vassarotti A."/>
            <person name="Viari A."/>
            <person name="Wambutt R."/>
            <person name="Wedler E."/>
            <person name="Wedler H."/>
            <person name="Weitzenegger T."/>
            <person name="Winters P."/>
            <person name="Wipat A."/>
            <person name="Yamamoto H."/>
            <person name="Yamane K."/>
            <person name="Yasumoto K."/>
            <person name="Yata K."/>
            <person name="Yoshida K."/>
            <person name="Yoshikawa H.-F."/>
            <person name="Zumstein E."/>
            <person name="Yoshikawa H."/>
            <person name="Danchin A."/>
        </authorList>
    </citation>
    <scope>NUCLEOTIDE SEQUENCE [LARGE SCALE GENOMIC DNA]</scope>
    <source>
        <strain>168</strain>
    </source>
</reference>
<reference key="4">
    <citation type="journal article" date="1996" name="J. Bacteriol.">
        <title>Cold shock stress-induced proteins in Bacillus subtilis.</title>
        <authorList>
            <person name="Graumann P."/>
            <person name="Schroeder K."/>
            <person name="Schmid R."/>
            <person name="Marahiel M.A."/>
        </authorList>
    </citation>
    <scope>PROTEIN SEQUENCE OF 1-26</scope>
    <source>
        <strain>168 / JH642</strain>
    </source>
</reference>
<dbReference type="EC" id="5.2.1.8"/>
<dbReference type="EMBL" id="L09228">
    <property type="protein sequence ID" value="AAA67475.1"/>
    <property type="molecule type" value="Genomic_DNA"/>
</dbReference>
<dbReference type="EMBL" id="X73898">
    <property type="protein sequence ID" value="CAA52103.1"/>
    <property type="molecule type" value="Genomic_DNA"/>
</dbReference>
<dbReference type="EMBL" id="AL009126">
    <property type="protein sequence ID" value="CAB14268.1"/>
    <property type="molecule type" value="Genomic_DNA"/>
</dbReference>
<dbReference type="PIR" id="S45537">
    <property type="entry name" value="S45537"/>
</dbReference>
<dbReference type="RefSeq" id="NP_390217.1">
    <property type="nucleotide sequence ID" value="NC_000964.3"/>
</dbReference>
<dbReference type="RefSeq" id="WP_003223931.1">
    <property type="nucleotide sequence ID" value="NZ_OZ025638.1"/>
</dbReference>
<dbReference type="SMR" id="P35137"/>
<dbReference type="FunCoup" id="P35137">
    <property type="interactions" value="457"/>
</dbReference>
<dbReference type="STRING" id="224308.BSU23360"/>
<dbReference type="jPOST" id="P35137"/>
<dbReference type="PaxDb" id="224308-BSU23360"/>
<dbReference type="EnsemblBacteria" id="CAB14268">
    <property type="protein sequence ID" value="CAB14268"/>
    <property type="gene ID" value="BSU_23360"/>
</dbReference>
<dbReference type="GeneID" id="938934"/>
<dbReference type="KEGG" id="bsu:BSU23360"/>
<dbReference type="PATRIC" id="fig|224308.179.peg.2544"/>
<dbReference type="eggNOG" id="COG0652">
    <property type="taxonomic scope" value="Bacteria"/>
</dbReference>
<dbReference type="InParanoid" id="P35137"/>
<dbReference type="OrthoDB" id="9807797at2"/>
<dbReference type="PhylomeDB" id="P35137"/>
<dbReference type="BioCyc" id="BSUB:BSU23360-MONOMER"/>
<dbReference type="PRO" id="PR:P35137"/>
<dbReference type="Proteomes" id="UP000001570">
    <property type="component" value="Chromosome"/>
</dbReference>
<dbReference type="GO" id="GO:0005737">
    <property type="term" value="C:cytoplasm"/>
    <property type="evidence" value="ECO:0007669"/>
    <property type="project" value="UniProtKB-SubCell"/>
</dbReference>
<dbReference type="GO" id="GO:0003755">
    <property type="term" value="F:peptidyl-prolyl cis-trans isomerase activity"/>
    <property type="evidence" value="ECO:0000318"/>
    <property type="project" value="GO_Central"/>
</dbReference>
<dbReference type="GO" id="GO:0006457">
    <property type="term" value="P:protein folding"/>
    <property type="evidence" value="ECO:0000318"/>
    <property type="project" value="GO_Central"/>
</dbReference>
<dbReference type="CDD" id="cd00317">
    <property type="entry name" value="cyclophilin"/>
    <property type="match status" value="1"/>
</dbReference>
<dbReference type="Gene3D" id="2.40.100.10">
    <property type="entry name" value="Cyclophilin-like"/>
    <property type="match status" value="1"/>
</dbReference>
<dbReference type="InterPro" id="IPR029000">
    <property type="entry name" value="Cyclophilin-like_dom_sf"/>
</dbReference>
<dbReference type="InterPro" id="IPR024936">
    <property type="entry name" value="Cyclophilin-type_PPIase"/>
</dbReference>
<dbReference type="InterPro" id="IPR020892">
    <property type="entry name" value="Cyclophilin-type_PPIase_CS"/>
</dbReference>
<dbReference type="InterPro" id="IPR002130">
    <property type="entry name" value="Cyclophilin-type_PPIase_dom"/>
</dbReference>
<dbReference type="InterPro" id="IPR044666">
    <property type="entry name" value="Cyclophilin_A-like"/>
</dbReference>
<dbReference type="PANTHER" id="PTHR45625">
    <property type="entry name" value="PEPTIDYL-PROLYL CIS-TRANS ISOMERASE-RELATED"/>
    <property type="match status" value="1"/>
</dbReference>
<dbReference type="PANTHER" id="PTHR45625:SF4">
    <property type="entry name" value="PEPTIDYLPROLYL ISOMERASE DOMAIN AND WD REPEAT-CONTAINING PROTEIN 1"/>
    <property type="match status" value="1"/>
</dbReference>
<dbReference type="Pfam" id="PF00160">
    <property type="entry name" value="Pro_isomerase"/>
    <property type="match status" value="1"/>
</dbReference>
<dbReference type="PIRSF" id="PIRSF001467">
    <property type="entry name" value="Peptidylpro_ismrse"/>
    <property type="match status" value="1"/>
</dbReference>
<dbReference type="PRINTS" id="PR00153">
    <property type="entry name" value="CSAPPISMRASE"/>
</dbReference>
<dbReference type="SUPFAM" id="SSF50891">
    <property type="entry name" value="Cyclophilin-like"/>
    <property type="match status" value="1"/>
</dbReference>
<dbReference type="PROSITE" id="PS00170">
    <property type="entry name" value="CSA_PPIASE_1"/>
    <property type="match status" value="1"/>
</dbReference>
<dbReference type="PROSITE" id="PS50072">
    <property type="entry name" value="CSA_PPIASE_2"/>
    <property type="match status" value="1"/>
</dbReference>
<evidence type="ECO:0000250" key="1"/>
<evidence type="ECO:0000255" key="2">
    <source>
        <dbReference type="PROSITE-ProRule" id="PRU00156"/>
    </source>
</evidence>
<evidence type="ECO:0000305" key="3"/>
<accession>P35137</accession>
<keyword id="KW-0963">Cytoplasm</keyword>
<keyword id="KW-0903">Direct protein sequencing</keyword>
<keyword id="KW-0413">Isomerase</keyword>
<keyword id="KW-1185">Reference proteome</keyword>
<keyword id="KW-0697">Rotamase</keyword>
<sequence length="143" mass="15256">MKTGYFLLEDGNKIEFELYPEAAPGTVANFEKLANEGFYDGLTFHRVIPGFVSQGGCPHGTGTGGPGYTIKCETEGNPHTHEAGALSMAHAGKDTGGSQFFIVHEPQPHLNGVHTVFGKVTSGLEFAKNMSNGDVMKEVRVEG</sequence>
<organism>
    <name type="scientific">Bacillus subtilis (strain 168)</name>
    <dbReference type="NCBI Taxonomy" id="224308"/>
    <lineage>
        <taxon>Bacteria</taxon>
        <taxon>Bacillati</taxon>
        <taxon>Bacillota</taxon>
        <taxon>Bacilli</taxon>
        <taxon>Bacillales</taxon>
        <taxon>Bacillaceae</taxon>
        <taxon>Bacillus</taxon>
    </lineage>
</organism>
<comment type="function">
    <text>PPIases accelerate the folding of proteins. It catalyzes the cis-trans isomerization of proline imidic peptide bonds in oligopeptides.</text>
</comment>
<comment type="catalytic activity">
    <reaction>
        <text>[protein]-peptidylproline (omega=180) = [protein]-peptidylproline (omega=0)</text>
        <dbReference type="Rhea" id="RHEA:16237"/>
        <dbReference type="Rhea" id="RHEA-COMP:10747"/>
        <dbReference type="Rhea" id="RHEA-COMP:10748"/>
        <dbReference type="ChEBI" id="CHEBI:83833"/>
        <dbReference type="ChEBI" id="CHEBI:83834"/>
        <dbReference type="EC" id="5.2.1.8"/>
    </reaction>
</comment>
<comment type="activity regulation">
    <text>Inhibited by cyclosporin A (CsA).</text>
</comment>
<comment type="subcellular location">
    <subcellularLocation>
        <location evidence="1">Cytoplasm</location>
    </subcellularLocation>
</comment>
<comment type="similarity">
    <text evidence="3">Belongs to the cyclophilin-type PPIase family.</text>
</comment>
<name>PPIB_BACSU</name>
<protein>
    <recommendedName>
        <fullName>Peptidyl-prolyl cis-trans isomerase B</fullName>
        <shortName>PPIase B</shortName>
        <ecNumber>5.2.1.8</ecNumber>
    </recommendedName>
    <alternativeName>
        <fullName>Rotamase B</fullName>
    </alternativeName>
</protein>